<proteinExistence type="evidence at protein level"/>
<comment type="function">
    <text evidence="1 5">Involved in the degradation of phospho-AI-2, thereby terminating induction of the lsr operon and closing the AI-2 signaling cycle. Catalyzes the transfer of an acetyl moiety from 3-hydroxy-5-phosphonooxypentane-2,4-dione to CoA to form glycerone phosphate and acetyl-CoA.</text>
</comment>
<comment type="catalytic activity">
    <reaction evidence="1 5">
        <text>dihydroxyacetone phosphate + acetyl-CoA = 3-hydroxy-2,4-dioxopentyl phosphate + CoA</text>
        <dbReference type="Rhea" id="RHEA:44736"/>
        <dbReference type="ChEBI" id="CHEBI:57287"/>
        <dbReference type="ChEBI" id="CHEBI:57288"/>
        <dbReference type="ChEBI" id="CHEBI:57642"/>
        <dbReference type="ChEBI" id="CHEBI:84359"/>
        <dbReference type="EC" id="2.3.1.245"/>
    </reaction>
</comment>
<comment type="biophysicochemical properties">
    <kinetics>
        <text evidence="5">kcat is 127 sec(-1).</text>
    </kinetics>
</comment>
<comment type="subunit">
    <text evidence="1 4">Homodecamer.</text>
</comment>
<comment type="subcellular location">
    <subcellularLocation>
        <location evidence="1">Cytoplasm</location>
    </subcellularLocation>
</comment>
<comment type="induction">
    <text evidence="2 3">In the absence of AI-2, repressed by LsrR. Induced by AI-2, via release of the LsrR repressor. In the absence of glucose, induced by cAMP-CRP by direct binding to the upstream region of the lsr promoter.</text>
</comment>
<comment type="similarity">
    <text evidence="1 6">Belongs to the DeoC/FbaB aldolase family.</text>
</comment>
<feature type="chain" id="PRO_0000138945" description="3-hydroxy-5-phosphonooxypentane-2,4-dione thiolase">
    <location>
        <begin position="1"/>
        <end position="291"/>
    </location>
</feature>
<feature type="active site" description="Schiff-base intermediate with substrate" evidence="1 5">
    <location>
        <position position="203"/>
    </location>
</feature>
<feature type="mutagenesis site" description="No activity." evidence="5">
    <original>D</original>
    <variation>A</variation>
    <location>
        <position position="57"/>
    </location>
</feature>
<feature type="mutagenesis site" description="No activity." evidence="5">
    <original>K</original>
    <variation>A</variation>
    <location>
        <position position="203"/>
    </location>
</feature>
<feature type="mutagenesis site" description="No activity." evidence="5">
    <original>D</original>
    <variation>A</variation>
    <location>
        <position position="251"/>
    </location>
</feature>
<feature type="helix" evidence="7">
    <location>
        <begin position="34"/>
        <end position="43"/>
    </location>
</feature>
<feature type="turn" evidence="7">
    <location>
        <begin position="46"/>
        <end position="48"/>
    </location>
</feature>
<feature type="strand" evidence="7">
    <location>
        <begin position="51"/>
        <end position="55"/>
    </location>
</feature>
<feature type="helix" evidence="7">
    <location>
        <begin position="59"/>
        <end position="62"/>
    </location>
</feature>
<feature type="helix" evidence="7">
    <location>
        <begin position="71"/>
        <end position="74"/>
    </location>
</feature>
<feature type="helix" evidence="7">
    <location>
        <begin position="76"/>
        <end position="81"/>
    </location>
</feature>
<feature type="strand" evidence="7">
    <location>
        <begin position="83"/>
        <end position="87"/>
    </location>
</feature>
<feature type="helix" evidence="7">
    <location>
        <begin position="89"/>
        <end position="95"/>
    </location>
</feature>
<feature type="helix" evidence="7">
    <location>
        <begin position="98"/>
        <end position="100"/>
    </location>
</feature>
<feature type="strand" evidence="7">
    <location>
        <begin position="104"/>
        <end position="107"/>
    </location>
</feature>
<feature type="strand" evidence="8">
    <location>
        <begin position="109"/>
        <end position="111"/>
    </location>
</feature>
<feature type="helix" evidence="7">
    <location>
        <begin position="127"/>
        <end position="132"/>
    </location>
</feature>
<feature type="strand" evidence="7">
    <location>
        <begin position="136"/>
        <end position="142"/>
    </location>
</feature>
<feature type="helix" evidence="7">
    <location>
        <begin position="149"/>
        <end position="164"/>
    </location>
</feature>
<feature type="turn" evidence="7">
    <location>
        <begin position="165"/>
        <end position="167"/>
    </location>
</feature>
<feature type="strand" evidence="7">
    <location>
        <begin position="170"/>
        <end position="174"/>
    </location>
</feature>
<feature type="helix" evidence="7">
    <location>
        <begin position="184"/>
        <end position="196"/>
    </location>
</feature>
<feature type="strand" evidence="7">
    <location>
        <begin position="200"/>
        <end position="205"/>
    </location>
</feature>
<feature type="turn" evidence="7">
    <location>
        <begin position="208"/>
        <end position="210"/>
    </location>
</feature>
<feature type="helix" evidence="7">
    <location>
        <begin position="211"/>
        <end position="216"/>
    </location>
</feature>
<feature type="strand" evidence="7">
    <location>
        <begin position="222"/>
        <end position="225"/>
    </location>
</feature>
<feature type="helix" evidence="7">
    <location>
        <begin position="232"/>
        <end position="244"/>
    </location>
</feature>
<feature type="strand" evidence="7">
    <location>
        <begin position="248"/>
        <end position="253"/>
    </location>
</feature>
<feature type="helix" evidence="7">
    <location>
        <begin position="254"/>
        <end position="257"/>
    </location>
</feature>
<feature type="strand" evidence="7">
    <location>
        <begin position="259"/>
        <end position="261"/>
    </location>
</feature>
<feature type="helix" evidence="7">
    <location>
        <begin position="262"/>
        <end position="275"/>
    </location>
</feature>
<feature type="helix" evidence="7">
    <location>
        <begin position="279"/>
        <end position="287"/>
    </location>
</feature>
<reference key="1">
    <citation type="journal article" date="1997" name="Science">
        <title>The complete genome sequence of Escherichia coli K-12.</title>
        <authorList>
            <person name="Blattner F.R."/>
            <person name="Plunkett G. III"/>
            <person name="Bloch C.A."/>
            <person name="Perna N.T."/>
            <person name="Burland V."/>
            <person name="Riley M."/>
            <person name="Collado-Vides J."/>
            <person name="Glasner J.D."/>
            <person name="Rode C.K."/>
            <person name="Mayhew G.F."/>
            <person name="Gregor J."/>
            <person name="Davis N.W."/>
            <person name="Kirkpatrick H.A."/>
            <person name="Goeden M.A."/>
            <person name="Rose D.J."/>
            <person name="Mau B."/>
            <person name="Shao Y."/>
        </authorList>
    </citation>
    <scope>NUCLEOTIDE SEQUENCE [LARGE SCALE GENOMIC DNA]</scope>
    <source>
        <strain>K12 / MG1655 / ATCC 47076</strain>
    </source>
</reference>
<reference key="2">
    <citation type="journal article" date="2006" name="Mol. Syst. Biol.">
        <title>Highly accurate genome sequences of Escherichia coli K-12 strains MG1655 and W3110.</title>
        <authorList>
            <person name="Hayashi K."/>
            <person name="Morooka N."/>
            <person name="Yamamoto Y."/>
            <person name="Fujita K."/>
            <person name="Isono K."/>
            <person name="Choi S."/>
            <person name="Ohtsubo E."/>
            <person name="Baba T."/>
            <person name="Wanner B.L."/>
            <person name="Mori H."/>
            <person name="Horiuchi T."/>
        </authorList>
    </citation>
    <scope>NUCLEOTIDE SEQUENCE [LARGE SCALE GENOMIC DNA]</scope>
    <source>
        <strain>K12 / W3110 / ATCC 27325 / DSM 5911</strain>
    </source>
</reference>
<reference key="3">
    <citation type="journal article" date="2005" name="J. Bacteriol.">
        <title>Regulation of uptake and processing of the quorum-sensing autoinducer AI-2 in Escherichia coli.</title>
        <authorList>
            <person name="Xavier K.B."/>
            <person name="Bassler B.L."/>
        </authorList>
    </citation>
    <scope>INDUCTION</scope>
    <source>
        <strain>K12 / MG1655 / ATCC 47076</strain>
    </source>
</reference>
<reference key="4">
    <citation type="journal article" date="2005" name="J. Bacteriol.">
        <title>Cyclic AMP (cAMP) and cAMP receptor protein influence both synthesis and uptake of extracellular autoinducer 2 in Escherichia coli.</title>
        <authorList>
            <person name="Wang L."/>
            <person name="Hashimoto Y."/>
            <person name="Tsao C.-Y."/>
            <person name="Valdes J.J."/>
            <person name="Bentley W.E."/>
        </authorList>
    </citation>
    <scope>INDUCTION</scope>
    <source>
        <strain>K12 / W3110 / ATCC 27325 / DSM 5911</strain>
    </source>
</reference>
<reference key="5">
    <citation type="journal article" date="2009" name="PLoS ONE">
        <title>The crystal structure of the Escherichia coli autoinducer-2 processing protein LsrF.</title>
        <authorList>
            <person name="Diaz Z."/>
            <person name="Xavier K.B."/>
            <person name="Miller S.T."/>
        </authorList>
    </citation>
    <scope>X-RAY CRYSTALLOGRAPHY (2.50 ANGSTROMS) OF APOENZYME AND IN COMPLEXES WITH D-RIBITOL 5-PHOSPHATE AND D-RIBULOSE 5-PHOSPHATE</scope>
    <scope>SUBUNIT</scope>
</reference>
<reference key="6">
    <citation type="journal article" date="2014" name="Proc. Natl. Acad. Sci. U.S.A.">
        <title>LsrF, a coenzyme A-dependent thiolase, catalyzes the terminal step in processing the quorum sensing signal autoinducer-2.</title>
        <authorList>
            <person name="Marques J.C."/>
            <person name="Oh I.K."/>
            <person name="Ly D.C."/>
            <person name="Lamosa P."/>
            <person name="Ventura M.R."/>
            <person name="Miller S.T."/>
            <person name="Xavier K.B."/>
        </authorList>
    </citation>
    <scope>X-RAY CRYSTALLOGRAPHY (2.51 ANGSTROMS) OF MUTANT ALA-203 IN COMPLEX WITH 3-HYDROXY-5-PHOSPHONOOXYPENTANE-2,4-DIONE</scope>
    <scope>FUNCTION</scope>
    <scope>CATALYTIC ACTIVITY</scope>
    <scope>MUTAGENESIS OF ASP-57; LYS-203 AND ASP-251</scope>
    <scope>BIOPHYSICOCHEMICAL PROPERTIES</scope>
    <scope>ACTIVE SITE</scope>
</reference>
<dbReference type="EC" id="2.3.1.245" evidence="1 5"/>
<dbReference type="EMBL" id="U00096">
    <property type="protein sequence ID" value="AAC74590.1"/>
    <property type="molecule type" value="Genomic_DNA"/>
</dbReference>
<dbReference type="EMBL" id="AP009048">
    <property type="protein sequence ID" value="BAE76457.1"/>
    <property type="molecule type" value="Genomic_DNA"/>
</dbReference>
<dbReference type="PIR" id="H64905">
    <property type="entry name" value="H64905"/>
</dbReference>
<dbReference type="RefSeq" id="NP_416034.1">
    <property type="nucleotide sequence ID" value="NC_000913.3"/>
</dbReference>
<dbReference type="RefSeq" id="WP_000774165.1">
    <property type="nucleotide sequence ID" value="NZ_SSZK01000001.1"/>
</dbReference>
<dbReference type="PDB" id="3GKF">
    <property type="method" value="X-ray"/>
    <property type="resolution" value="2.90 A"/>
    <property type="chains" value="A/B/C/D/E/F/G/H/I/J/K/L/M/N/O/P/Q/R/S/T=1-291"/>
</dbReference>
<dbReference type="PDB" id="3GLC">
    <property type="method" value="X-ray"/>
    <property type="resolution" value="2.50 A"/>
    <property type="chains" value="A/B/C/D/E/F/G/H/I/J/K/L/M/N/O/P/Q/R/S/T=1-291"/>
</dbReference>
<dbReference type="PDB" id="3GND">
    <property type="method" value="X-ray"/>
    <property type="resolution" value="2.90 A"/>
    <property type="chains" value="A/B/C/D/E/F/G/H/I/J/K/L/M/N/O/P/Q/R/S/T=1-291"/>
</dbReference>
<dbReference type="PDB" id="4P2V">
    <property type="method" value="X-ray"/>
    <property type="resolution" value="2.51 A"/>
    <property type="chains" value="A/B/C/D/E/F/G/H/I/K=1-291"/>
</dbReference>
<dbReference type="PDBsum" id="3GKF"/>
<dbReference type="PDBsum" id="3GLC"/>
<dbReference type="PDBsum" id="3GND"/>
<dbReference type="PDBsum" id="4P2V"/>
<dbReference type="SMR" id="P76143"/>
<dbReference type="BioGRID" id="4261350">
    <property type="interactions" value="22"/>
</dbReference>
<dbReference type="BioGRID" id="850431">
    <property type="interactions" value="1"/>
</dbReference>
<dbReference type="DIP" id="DIP-12754N"/>
<dbReference type="FunCoup" id="P76143">
    <property type="interactions" value="73"/>
</dbReference>
<dbReference type="IntAct" id="P76143">
    <property type="interactions" value="5"/>
</dbReference>
<dbReference type="STRING" id="511145.b1517"/>
<dbReference type="jPOST" id="P76143"/>
<dbReference type="PaxDb" id="511145-b1517"/>
<dbReference type="EnsemblBacteria" id="AAC74590">
    <property type="protein sequence ID" value="AAC74590"/>
    <property type="gene ID" value="b1517"/>
</dbReference>
<dbReference type="GeneID" id="946071"/>
<dbReference type="KEGG" id="ecj:JW1510"/>
<dbReference type="KEGG" id="eco:b1517"/>
<dbReference type="KEGG" id="ecoc:C3026_08770"/>
<dbReference type="PATRIC" id="fig|1411691.4.peg.750"/>
<dbReference type="EchoBASE" id="EB3571"/>
<dbReference type="eggNOG" id="COG1830">
    <property type="taxonomic scope" value="Bacteria"/>
</dbReference>
<dbReference type="HOGENOM" id="CLU_057069_1_0_6"/>
<dbReference type="InParanoid" id="P76143"/>
<dbReference type="OMA" id="CEYWGMP"/>
<dbReference type="OrthoDB" id="5915071at2"/>
<dbReference type="PhylomeDB" id="P76143"/>
<dbReference type="BioCyc" id="EcoCyc:G6804-MONOMER"/>
<dbReference type="BioCyc" id="MetaCyc:G6804-MONOMER"/>
<dbReference type="BRENDA" id="2.3.1.245">
    <property type="organism ID" value="2026"/>
</dbReference>
<dbReference type="EvolutionaryTrace" id="P76143"/>
<dbReference type="PHI-base" id="PHI:9996"/>
<dbReference type="PRO" id="PR:P76143"/>
<dbReference type="Proteomes" id="UP000000625">
    <property type="component" value="Chromosome"/>
</dbReference>
<dbReference type="GO" id="GO:0005737">
    <property type="term" value="C:cytoplasm"/>
    <property type="evidence" value="ECO:0007669"/>
    <property type="project" value="UniProtKB-SubCell"/>
</dbReference>
<dbReference type="GO" id="GO:0016747">
    <property type="term" value="F:acyltransferase activity, transferring groups other than amino-acyl groups"/>
    <property type="evidence" value="ECO:0000314"/>
    <property type="project" value="EcoCyc"/>
</dbReference>
<dbReference type="GO" id="GO:0004332">
    <property type="term" value="F:fructose-bisphosphate aldolase activity"/>
    <property type="evidence" value="ECO:0007669"/>
    <property type="project" value="InterPro"/>
</dbReference>
<dbReference type="CDD" id="cd00958">
    <property type="entry name" value="DhnA"/>
    <property type="match status" value="1"/>
</dbReference>
<dbReference type="FunFam" id="3.20.20.70:FF:000168">
    <property type="entry name" value="3-hydroxy-5-phosphonooxypentane-2,4-dione thiolase"/>
    <property type="match status" value="1"/>
</dbReference>
<dbReference type="Gene3D" id="3.20.20.70">
    <property type="entry name" value="Aldolase class I"/>
    <property type="match status" value="1"/>
</dbReference>
<dbReference type="HAMAP" id="MF_02052">
    <property type="entry name" value="LsrF"/>
    <property type="match status" value="1"/>
</dbReference>
<dbReference type="InterPro" id="IPR013785">
    <property type="entry name" value="Aldolase_TIM"/>
</dbReference>
<dbReference type="InterPro" id="IPR002915">
    <property type="entry name" value="DeoC/FbaB/LacD_aldolase"/>
</dbReference>
<dbReference type="InterPro" id="IPR050456">
    <property type="entry name" value="DeoC/FbaB_aldolase"/>
</dbReference>
<dbReference type="InterPro" id="IPR041720">
    <property type="entry name" value="FbaB-like"/>
</dbReference>
<dbReference type="InterPro" id="IPR033673">
    <property type="entry name" value="LsrF"/>
</dbReference>
<dbReference type="NCBIfam" id="NF006081">
    <property type="entry name" value="PRK08227.1"/>
    <property type="match status" value="1"/>
</dbReference>
<dbReference type="PANTHER" id="PTHR47916:SF1">
    <property type="entry name" value="3-HYDROXY-5-PHOSPHONOOXYPENTANE-2,4-DIONE THIOLASE"/>
    <property type="match status" value="1"/>
</dbReference>
<dbReference type="PANTHER" id="PTHR47916">
    <property type="entry name" value="FRUCTOSE-BISPHOSPHATE ALDOLASE CLASS 1"/>
    <property type="match status" value="1"/>
</dbReference>
<dbReference type="Pfam" id="PF01791">
    <property type="entry name" value="DeoC"/>
    <property type="match status" value="1"/>
</dbReference>
<dbReference type="PIRSF" id="PIRSF038992">
    <property type="entry name" value="Aldolase_Ia"/>
    <property type="match status" value="1"/>
</dbReference>
<dbReference type="SMART" id="SM01133">
    <property type="entry name" value="DeoC"/>
    <property type="match status" value="1"/>
</dbReference>
<dbReference type="SUPFAM" id="SSF51569">
    <property type="entry name" value="Aldolase"/>
    <property type="match status" value="1"/>
</dbReference>
<evidence type="ECO:0000255" key="1">
    <source>
        <dbReference type="HAMAP-Rule" id="MF_02052"/>
    </source>
</evidence>
<evidence type="ECO:0000269" key="2">
    <source>
    </source>
</evidence>
<evidence type="ECO:0000269" key="3">
    <source>
    </source>
</evidence>
<evidence type="ECO:0000269" key="4">
    <source>
    </source>
</evidence>
<evidence type="ECO:0000269" key="5">
    <source>
    </source>
</evidence>
<evidence type="ECO:0000305" key="6"/>
<evidence type="ECO:0007829" key="7">
    <source>
        <dbReference type="PDB" id="3GLC"/>
    </source>
</evidence>
<evidence type="ECO:0007829" key="8">
    <source>
        <dbReference type="PDB" id="4P2V"/>
    </source>
</evidence>
<sequence length="291" mass="31893">MADLDDIKDGKDFRTDQPQKNIPFTLKGCGALDWGMQSRLSRIFNPKTGKTVMLAFDHGYFQGPTTGLERIDINIAPLFEHADVLMCTRGILRSVVPPATNRPVVLRASGANSILAELSNEAVALSMDDAVRLNSCAVAAQVYIGSEYEHQSIKNIIQLVDAGMKVGMPTMAVTGVGKDMVRDQRYFSLATRIAAEMGAQIIKTYYVEKGFERIVAGCPVPIVIAGGKKLPEREALEMCWQAIDQGASGVDMGRNIFQSDHPVAMMKAVQAVVHHNETADRAYELYLSEKQ</sequence>
<accession>P76143</accession>
<accession>Q2MB99</accession>
<gene>
    <name evidence="1" type="primary">lsrF</name>
    <name type="synonym">yneB</name>
    <name type="ordered locus">b1517</name>
    <name type="ordered locus">JW1510</name>
</gene>
<protein>
    <recommendedName>
        <fullName evidence="1">3-hydroxy-5-phosphonooxypentane-2,4-dione thiolase</fullName>
        <ecNumber evidence="1 5">2.3.1.245</ecNumber>
    </recommendedName>
</protein>
<name>LSRF_ECOLI</name>
<keyword id="KW-0002">3D-structure</keyword>
<keyword id="KW-0963">Cytoplasm</keyword>
<keyword id="KW-1185">Reference proteome</keyword>
<keyword id="KW-0704">Schiff base</keyword>
<keyword id="KW-0808">Transferase</keyword>
<organism>
    <name type="scientific">Escherichia coli (strain K12)</name>
    <dbReference type="NCBI Taxonomy" id="83333"/>
    <lineage>
        <taxon>Bacteria</taxon>
        <taxon>Pseudomonadati</taxon>
        <taxon>Pseudomonadota</taxon>
        <taxon>Gammaproteobacteria</taxon>
        <taxon>Enterobacterales</taxon>
        <taxon>Enterobacteriaceae</taxon>
        <taxon>Escherichia</taxon>
    </lineage>
</organism>